<accession>Q9GZK7</accession>
<accession>A2BF33</accession>
<accession>A6NFQ3</accession>
<accession>B0S7T2</accession>
<accession>Q5ST16</accession>
<accession>Q9GZK8</accession>
<proteinExistence type="evidence at transcript level"/>
<name>O11A1_HUMAN</name>
<reference key="1">
    <citation type="book" date="2000" name="Major histocompatibility complex-evolution, structure, and function">
        <title>Polymorphic olfactory receptor genes and HLA loci constitute extended haplotypes.</title>
        <editorList>
            <person name="Kasahara M."/>
        </editorList>
        <authorList>
            <person name="Ziegler A."/>
            <person name="Ehlers A."/>
            <person name="Forbes S.A."/>
            <person name="Trowsdale J."/>
            <person name="Uchanska-Ziegler B."/>
            <person name="Volz A."/>
            <person name="Younger R."/>
            <person name="Beck S."/>
        </authorList>
    </citation>
    <scope>NUCLEOTIDE SEQUENCE [GENOMIC DNA]</scope>
    <scope>VARIANT THR-165</scope>
</reference>
<reference key="2">
    <citation type="journal article" date="2003" name="J. Biol. Chem.">
        <title>Complex transcription and splicing of odorant receptor genes.</title>
        <authorList>
            <person name="Volz A."/>
            <person name="Ehlers A."/>
            <person name="Younger R."/>
            <person name="Forbes S."/>
            <person name="Trowsdale J."/>
            <person name="Schnorr D."/>
            <person name="Beck S."/>
            <person name="Ziegler A."/>
        </authorList>
    </citation>
    <scope>NUCLEOTIDE SEQUENCE [MRNA]</scope>
    <source>
        <tissue>Testis</tissue>
    </source>
</reference>
<reference key="3">
    <citation type="journal article" date="2003" name="Nature">
        <title>The DNA sequence and analysis of human chromosome 6.</title>
        <authorList>
            <person name="Mungall A.J."/>
            <person name="Palmer S.A."/>
            <person name="Sims S.K."/>
            <person name="Edwards C.A."/>
            <person name="Ashurst J.L."/>
            <person name="Wilming L."/>
            <person name="Jones M.C."/>
            <person name="Horton R."/>
            <person name="Hunt S.E."/>
            <person name="Scott C.E."/>
            <person name="Gilbert J.G.R."/>
            <person name="Clamp M.E."/>
            <person name="Bethel G."/>
            <person name="Milne S."/>
            <person name="Ainscough R."/>
            <person name="Almeida J.P."/>
            <person name="Ambrose K.D."/>
            <person name="Andrews T.D."/>
            <person name="Ashwell R.I.S."/>
            <person name="Babbage A.K."/>
            <person name="Bagguley C.L."/>
            <person name="Bailey J."/>
            <person name="Banerjee R."/>
            <person name="Barker D.J."/>
            <person name="Barlow K.F."/>
            <person name="Bates K."/>
            <person name="Beare D.M."/>
            <person name="Beasley H."/>
            <person name="Beasley O."/>
            <person name="Bird C.P."/>
            <person name="Blakey S.E."/>
            <person name="Bray-Allen S."/>
            <person name="Brook J."/>
            <person name="Brown A.J."/>
            <person name="Brown J.Y."/>
            <person name="Burford D.C."/>
            <person name="Burrill W."/>
            <person name="Burton J."/>
            <person name="Carder C."/>
            <person name="Carter N.P."/>
            <person name="Chapman J.C."/>
            <person name="Clark S.Y."/>
            <person name="Clark G."/>
            <person name="Clee C.M."/>
            <person name="Clegg S."/>
            <person name="Cobley V."/>
            <person name="Collier R.E."/>
            <person name="Collins J.E."/>
            <person name="Colman L.K."/>
            <person name="Corby N.R."/>
            <person name="Coville G.J."/>
            <person name="Culley K.M."/>
            <person name="Dhami P."/>
            <person name="Davies J."/>
            <person name="Dunn M."/>
            <person name="Earthrowl M.E."/>
            <person name="Ellington A.E."/>
            <person name="Evans K.A."/>
            <person name="Faulkner L."/>
            <person name="Francis M.D."/>
            <person name="Frankish A."/>
            <person name="Frankland J."/>
            <person name="French L."/>
            <person name="Garner P."/>
            <person name="Garnett J."/>
            <person name="Ghori M.J."/>
            <person name="Gilby L.M."/>
            <person name="Gillson C.J."/>
            <person name="Glithero R.J."/>
            <person name="Grafham D.V."/>
            <person name="Grant M."/>
            <person name="Gribble S."/>
            <person name="Griffiths C."/>
            <person name="Griffiths M.N.D."/>
            <person name="Hall R."/>
            <person name="Halls K.S."/>
            <person name="Hammond S."/>
            <person name="Harley J.L."/>
            <person name="Hart E.A."/>
            <person name="Heath P.D."/>
            <person name="Heathcott R."/>
            <person name="Holmes S.J."/>
            <person name="Howden P.J."/>
            <person name="Howe K.L."/>
            <person name="Howell G.R."/>
            <person name="Huckle E."/>
            <person name="Humphray S.J."/>
            <person name="Humphries M.D."/>
            <person name="Hunt A.R."/>
            <person name="Johnson C.M."/>
            <person name="Joy A.A."/>
            <person name="Kay M."/>
            <person name="Keenan S.J."/>
            <person name="Kimberley A.M."/>
            <person name="King A."/>
            <person name="Laird G.K."/>
            <person name="Langford C."/>
            <person name="Lawlor S."/>
            <person name="Leongamornlert D.A."/>
            <person name="Leversha M."/>
            <person name="Lloyd C.R."/>
            <person name="Lloyd D.M."/>
            <person name="Loveland J.E."/>
            <person name="Lovell J."/>
            <person name="Martin S."/>
            <person name="Mashreghi-Mohammadi M."/>
            <person name="Maslen G.L."/>
            <person name="Matthews L."/>
            <person name="McCann O.T."/>
            <person name="McLaren S.J."/>
            <person name="McLay K."/>
            <person name="McMurray A."/>
            <person name="Moore M.J.F."/>
            <person name="Mullikin J.C."/>
            <person name="Niblett D."/>
            <person name="Nickerson T."/>
            <person name="Novik K.L."/>
            <person name="Oliver K."/>
            <person name="Overton-Larty E.K."/>
            <person name="Parker A."/>
            <person name="Patel R."/>
            <person name="Pearce A.V."/>
            <person name="Peck A.I."/>
            <person name="Phillimore B.J.C.T."/>
            <person name="Phillips S."/>
            <person name="Plumb R.W."/>
            <person name="Porter K.M."/>
            <person name="Ramsey Y."/>
            <person name="Ranby S.A."/>
            <person name="Rice C.M."/>
            <person name="Ross M.T."/>
            <person name="Searle S.M."/>
            <person name="Sehra H.K."/>
            <person name="Sheridan E."/>
            <person name="Skuce C.D."/>
            <person name="Smith S."/>
            <person name="Smith M."/>
            <person name="Spraggon L."/>
            <person name="Squares S.L."/>
            <person name="Steward C.A."/>
            <person name="Sycamore N."/>
            <person name="Tamlyn-Hall G."/>
            <person name="Tester J."/>
            <person name="Theaker A.J."/>
            <person name="Thomas D.W."/>
            <person name="Thorpe A."/>
            <person name="Tracey A."/>
            <person name="Tromans A."/>
            <person name="Tubby B."/>
            <person name="Wall M."/>
            <person name="Wallis J.M."/>
            <person name="West A.P."/>
            <person name="White S.S."/>
            <person name="Whitehead S.L."/>
            <person name="Whittaker H."/>
            <person name="Wild A."/>
            <person name="Willey D.J."/>
            <person name="Wilmer T.E."/>
            <person name="Wood J.M."/>
            <person name="Wray P.W."/>
            <person name="Wyatt J.C."/>
            <person name="Young L."/>
            <person name="Younger R.M."/>
            <person name="Bentley D.R."/>
            <person name="Coulson A."/>
            <person name="Durbin R.M."/>
            <person name="Hubbard T."/>
            <person name="Sulston J.E."/>
            <person name="Dunham I."/>
            <person name="Rogers J."/>
            <person name="Beck S."/>
        </authorList>
    </citation>
    <scope>NUCLEOTIDE SEQUENCE [LARGE SCALE GENOMIC DNA]</scope>
    <scope>VARIANT THR-165</scope>
</reference>
<reference key="4">
    <citation type="submission" date="2005-07" db="EMBL/GenBank/DDBJ databases">
        <authorList>
            <person name="Mural R.J."/>
            <person name="Istrail S."/>
            <person name="Sutton G.G."/>
            <person name="Florea L."/>
            <person name="Halpern A.L."/>
            <person name="Mobarry C.M."/>
            <person name="Lippert R."/>
            <person name="Walenz B."/>
            <person name="Shatkay H."/>
            <person name="Dew I."/>
            <person name="Miller J.R."/>
            <person name="Flanigan M.J."/>
            <person name="Edwards N.J."/>
            <person name="Bolanos R."/>
            <person name="Fasulo D."/>
            <person name="Halldorsson B.V."/>
            <person name="Hannenhalli S."/>
            <person name="Turner R."/>
            <person name="Yooseph S."/>
            <person name="Lu F."/>
            <person name="Nusskern D.R."/>
            <person name="Shue B.C."/>
            <person name="Zheng X.H."/>
            <person name="Zhong F."/>
            <person name="Delcher A.L."/>
            <person name="Huson D.H."/>
            <person name="Kravitz S.A."/>
            <person name="Mouchard L."/>
            <person name="Reinert K."/>
            <person name="Remington K.A."/>
            <person name="Clark A.G."/>
            <person name="Waterman M.S."/>
            <person name="Eichler E.E."/>
            <person name="Adams M.D."/>
            <person name="Hunkapiller M.W."/>
            <person name="Myers E.W."/>
            <person name="Venter J.C."/>
        </authorList>
    </citation>
    <scope>NUCLEOTIDE SEQUENCE [LARGE SCALE GENOMIC DNA]</scope>
</reference>
<reference key="5">
    <citation type="journal article" date="2004" name="Proc. Natl. Acad. Sci. U.S.A.">
        <title>The human olfactory receptor gene family.</title>
        <authorList>
            <person name="Malnic B."/>
            <person name="Godfrey P.A."/>
            <person name="Buck L.B."/>
        </authorList>
    </citation>
    <scope>IDENTIFICATION</scope>
</reference>
<reference key="6">
    <citation type="journal article" date="2004" name="Proc. Natl. Acad. Sci. U.S.A.">
        <authorList>
            <person name="Malnic B."/>
            <person name="Godfrey P.A."/>
            <person name="Buck L.B."/>
        </authorList>
    </citation>
    <scope>ERRATUM OF PUBMED:14983052</scope>
</reference>
<protein>
    <recommendedName>
        <fullName>Olfactory receptor 11A1</fullName>
    </recommendedName>
    <alternativeName>
        <fullName>Hs6M1-18</fullName>
    </alternativeName>
    <alternativeName>
        <fullName>Olfactory receptor 11A2</fullName>
    </alternativeName>
    <alternativeName>
        <fullName>Olfactory receptor OR6-30</fullName>
    </alternativeName>
</protein>
<dbReference type="EMBL" id="AJ302614">
    <property type="protein sequence ID" value="CAC20534.1"/>
    <property type="molecule type" value="Genomic_DNA"/>
</dbReference>
<dbReference type="EMBL" id="AJ302615">
    <property type="protein sequence ID" value="CAC20535.1"/>
    <property type="molecule type" value="Genomic_DNA"/>
</dbReference>
<dbReference type="EMBL" id="AJ302616">
    <property type="protein sequence ID" value="CAC20536.1"/>
    <property type="molecule type" value="Genomic_DNA"/>
</dbReference>
<dbReference type="EMBL" id="AJ302617">
    <property type="protein sequence ID" value="CAC20537.1"/>
    <property type="molecule type" value="Genomic_DNA"/>
</dbReference>
<dbReference type="EMBL" id="AJ302618">
    <property type="protein sequence ID" value="CAC20538.1"/>
    <property type="molecule type" value="Genomic_DNA"/>
</dbReference>
<dbReference type="EMBL" id="AJ302619">
    <property type="protein sequence ID" value="CAC20539.1"/>
    <property type="molecule type" value="Genomic_DNA"/>
</dbReference>
<dbReference type="EMBL" id="AJ302620">
    <property type="protein sequence ID" value="CAC20540.1"/>
    <property type="molecule type" value="Genomic_DNA"/>
</dbReference>
<dbReference type="EMBL" id="AJ302621">
    <property type="protein sequence ID" value="CAC20541.1"/>
    <property type="molecule type" value="Genomic_DNA"/>
</dbReference>
<dbReference type="EMBL" id="AJ302622">
    <property type="protein sequence ID" value="CAC20542.1"/>
    <property type="molecule type" value="Genomic_DNA"/>
</dbReference>
<dbReference type="EMBL" id="AJ302623">
    <property type="protein sequence ID" value="CAC20543.1"/>
    <property type="molecule type" value="Genomic_DNA"/>
</dbReference>
<dbReference type="EMBL" id="AJ459857">
    <property type="protein sequence ID" value="CAD31040.1"/>
    <property type="molecule type" value="mRNA"/>
</dbReference>
<dbReference type="EMBL" id="AL035542">
    <property type="protein sequence ID" value="CAB44508.1"/>
    <property type="molecule type" value="Genomic_DNA"/>
</dbReference>
<dbReference type="EMBL" id="AL662869">
    <property type="status" value="NOT_ANNOTATED_CDS"/>
    <property type="molecule type" value="Genomic_DNA"/>
</dbReference>
<dbReference type="EMBL" id="AL645927">
    <property type="status" value="NOT_ANNOTATED_CDS"/>
    <property type="molecule type" value="Genomic_DNA"/>
</dbReference>
<dbReference type="EMBL" id="BX004810">
    <property type="status" value="NOT_ANNOTATED_CDS"/>
    <property type="molecule type" value="Genomic_DNA"/>
</dbReference>
<dbReference type="EMBL" id="BX248400">
    <property type="status" value="NOT_ANNOTATED_CDS"/>
    <property type="molecule type" value="Genomic_DNA"/>
</dbReference>
<dbReference type="EMBL" id="BX927133">
    <property type="status" value="NOT_ANNOTATED_CDS"/>
    <property type="molecule type" value="Genomic_DNA"/>
</dbReference>
<dbReference type="EMBL" id="CR848056">
    <property type="status" value="NOT_ANNOTATED_CDS"/>
    <property type="molecule type" value="Genomic_DNA"/>
</dbReference>
<dbReference type="EMBL" id="CR759768">
    <property type="status" value="NOT_ANNOTATED_CDS"/>
    <property type="molecule type" value="Genomic_DNA"/>
</dbReference>
<dbReference type="EMBL" id="CR388393">
    <property type="status" value="NOT_ANNOTATED_CDS"/>
    <property type="molecule type" value="Genomic_DNA"/>
</dbReference>
<dbReference type="EMBL" id="CH471081">
    <property type="protein sequence ID" value="EAX03192.1"/>
    <property type="molecule type" value="Genomic_DNA"/>
</dbReference>
<dbReference type="EMBL" id="BK004208">
    <property type="protein sequence ID" value="DAA04606.1"/>
    <property type="molecule type" value="Genomic_DNA"/>
</dbReference>
<dbReference type="CCDS" id="CCDS34363.1"/>
<dbReference type="RefSeq" id="NP_001381757.1">
    <property type="nucleotide sequence ID" value="NM_001394828.1"/>
</dbReference>
<dbReference type="RefSeq" id="NP_001381758.1">
    <property type="nucleotide sequence ID" value="NM_001394829.1"/>
</dbReference>
<dbReference type="RefSeq" id="NP_039225.1">
    <property type="nucleotide sequence ID" value="NM_013937.4"/>
</dbReference>
<dbReference type="SMR" id="Q9GZK7"/>
<dbReference type="FunCoup" id="Q9GZK7">
    <property type="interactions" value="502"/>
</dbReference>
<dbReference type="STRING" id="9606.ENSP00000366354"/>
<dbReference type="GlyCosmos" id="Q9GZK7">
    <property type="glycosylation" value="1 site, No reported glycans"/>
</dbReference>
<dbReference type="GlyGen" id="Q9GZK7">
    <property type="glycosylation" value="1 site"/>
</dbReference>
<dbReference type="iPTMnet" id="Q9GZK7"/>
<dbReference type="PhosphoSitePlus" id="Q9GZK7"/>
<dbReference type="BioMuta" id="OR11A1"/>
<dbReference type="DMDM" id="14423802"/>
<dbReference type="jPOST" id="Q9GZK7"/>
<dbReference type="PaxDb" id="9606-ENSP00000366354"/>
<dbReference type="PeptideAtlas" id="Q9GZK7"/>
<dbReference type="ProteomicsDB" id="80082"/>
<dbReference type="Antibodypedia" id="67971">
    <property type="antibodies" value="75 antibodies from 18 providers"/>
</dbReference>
<dbReference type="DNASU" id="26531"/>
<dbReference type="Ensembl" id="ENST00000377148.5">
    <property type="protein sequence ID" value="ENSP00000366353.1"/>
    <property type="gene ID" value="ENSG00000204694.13"/>
</dbReference>
<dbReference type="Ensembl" id="ENST00000377149.5">
    <property type="protein sequence ID" value="ENSP00000366354.1"/>
    <property type="gene ID" value="ENSG00000204694.13"/>
</dbReference>
<dbReference type="Ensembl" id="ENST00000383551.7">
    <property type="protein sequence ID" value="ENSP00000373043.3"/>
    <property type="gene ID" value="ENSG00000206472.11"/>
</dbReference>
<dbReference type="Ensembl" id="ENST00000383645.6">
    <property type="protein sequence ID" value="ENSP00000373141.2"/>
    <property type="gene ID" value="ENSG00000206517.12"/>
</dbReference>
<dbReference type="Ensembl" id="ENST00000400696.6">
    <property type="protein sequence ID" value="ENSP00000383532.2"/>
    <property type="gene ID" value="ENSG00000206472.11"/>
</dbReference>
<dbReference type="Ensembl" id="ENST00000400715.5">
    <property type="protein sequence ID" value="ENSP00000383550.1"/>
    <property type="gene ID" value="ENSG00000206517.12"/>
</dbReference>
<dbReference type="Ensembl" id="ENST00000411967.5">
    <property type="protein sequence ID" value="ENSP00000409994.1"/>
    <property type="gene ID" value="ENSG00000223898.8"/>
</dbReference>
<dbReference type="Ensembl" id="ENST00000418485.5">
    <property type="protein sequence ID" value="ENSP00000400657.1"/>
    <property type="gene ID" value="ENSG00000234347.8"/>
</dbReference>
<dbReference type="Ensembl" id="ENST00000418560.5">
    <property type="protein sequence ID" value="ENSP00000404787.1"/>
    <property type="gene ID" value="ENSG00000223898.8"/>
</dbReference>
<dbReference type="Ensembl" id="ENST00000419773.5">
    <property type="protein sequence ID" value="ENSP00000399062.1"/>
    <property type="gene ID" value="ENSG00000234347.8"/>
</dbReference>
<dbReference type="Ensembl" id="ENST00000421634.5">
    <property type="protein sequence ID" value="ENSP00000400331.1"/>
    <property type="gene ID" value="ENSG00000237258.8"/>
</dbReference>
<dbReference type="Ensembl" id="ENST00000427264.5">
    <property type="protein sequence ID" value="ENSP00000403427.1"/>
    <property type="gene ID" value="ENSG00000230780.8"/>
</dbReference>
<dbReference type="Ensembl" id="ENST00000428144.5">
    <property type="protein sequence ID" value="ENSP00000399592.1"/>
    <property type="gene ID" value="ENSG00000237258.8"/>
</dbReference>
<dbReference type="Ensembl" id="ENST00000435232.5">
    <property type="protein sequence ID" value="ENSP00000398659.1"/>
    <property type="gene ID" value="ENSG00000232289.8"/>
</dbReference>
<dbReference type="Ensembl" id="ENST00000440485.5">
    <property type="protein sequence ID" value="ENSP00000392324.1"/>
    <property type="gene ID" value="ENSG00000232289.8"/>
</dbReference>
<dbReference type="Ensembl" id="ENST00000444884.5">
    <property type="protein sequence ID" value="ENSP00000412097.1"/>
    <property type="gene ID" value="ENSG00000230780.8"/>
</dbReference>
<dbReference type="Ensembl" id="ENST00000546665.1">
    <property type="protein sequence ID" value="ENSP00000447956.1"/>
    <property type="gene ID" value="ENSG00000206472.11"/>
</dbReference>
<dbReference type="Ensembl" id="ENST00000547506.1">
    <property type="protein sequence ID" value="ENSP00000447215.1"/>
    <property type="gene ID" value="ENSG00000206517.12"/>
</dbReference>
<dbReference type="Ensembl" id="ENST00000547645.1">
    <property type="protein sequence ID" value="ENSP00000450263.1"/>
    <property type="gene ID" value="ENSG00000230780.8"/>
</dbReference>
<dbReference type="Ensembl" id="ENST00000548813.1">
    <property type="protein sequence ID" value="ENSP00000447267.1"/>
    <property type="gene ID" value="ENSG00000223898.8"/>
</dbReference>
<dbReference type="Ensembl" id="ENST00000549749.1">
    <property type="protein sequence ID" value="ENSP00000447745.1"/>
    <property type="gene ID" value="ENSG00000232289.8"/>
</dbReference>
<dbReference type="Ensembl" id="ENST00000551986.1">
    <property type="protein sequence ID" value="ENSP00000447627.1"/>
    <property type="gene ID" value="ENSG00000234347.8"/>
</dbReference>
<dbReference type="Ensembl" id="ENST00000552225.1">
    <property type="protein sequence ID" value="ENSP00000447222.1"/>
    <property type="gene ID" value="ENSG00000237258.8"/>
</dbReference>
<dbReference type="Ensembl" id="ENST00000641152.2">
    <property type="protein sequence ID" value="ENSP00000493093.1"/>
    <property type="gene ID" value="ENSG00000204694.13"/>
</dbReference>
<dbReference type="GeneID" id="26531"/>
<dbReference type="KEGG" id="hsa:26531"/>
<dbReference type="MANE-Select" id="ENST00000377149.5">
    <property type="protein sequence ID" value="ENSP00000366354.1"/>
    <property type="RefSeq nucleotide sequence ID" value="NM_001394828.1"/>
    <property type="RefSeq protein sequence ID" value="NP_001381757.1"/>
</dbReference>
<dbReference type="UCSC" id="uc003nmg.3">
    <property type="organism name" value="human"/>
</dbReference>
<dbReference type="AGR" id="HGNC:8176"/>
<dbReference type="CTD" id="26531"/>
<dbReference type="DisGeNET" id="26531"/>
<dbReference type="GeneCards" id="OR11A1"/>
<dbReference type="HGNC" id="HGNC:8176">
    <property type="gene designation" value="OR11A1"/>
</dbReference>
<dbReference type="HPA" id="ENSG00000204694">
    <property type="expression patterns" value="Not detected"/>
</dbReference>
<dbReference type="neXtProt" id="NX_Q9GZK7"/>
<dbReference type="OpenTargets" id="ENSG00000204694"/>
<dbReference type="PharmGKB" id="PA32010"/>
<dbReference type="VEuPathDB" id="HostDB:ENSG00000204694"/>
<dbReference type="eggNOG" id="ENOG502SKM8">
    <property type="taxonomic scope" value="Eukaryota"/>
</dbReference>
<dbReference type="GeneTree" id="ENSGT00940000163392"/>
<dbReference type="HOGENOM" id="CLU_012526_0_1_1"/>
<dbReference type="InParanoid" id="Q9GZK7"/>
<dbReference type="OMA" id="TWLSGFM"/>
<dbReference type="OrthoDB" id="9444602at2759"/>
<dbReference type="PAN-GO" id="Q9GZK7">
    <property type="GO annotations" value="0 GO annotations based on evolutionary models"/>
</dbReference>
<dbReference type="PhylomeDB" id="Q9GZK7"/>
<dbReference type="TreeFam" id="TF337187"/>
<dbReference type="PathwayCommons" id="Q9GZK7"/>
<dbReference type="Reactome" id="R-HSA-381753">
    <property type="pathway name" value="Olfactory Signaling Pathway"/>
</dbReference>
<dbReference type="Reactome" id="R-HSA-9752946">
    <property type="pathway name" value="Expression and translocation of olfactory receptors"/>
</dbReference>
<dbReference type="BioGRID-ORCS" id="26531">
    <property type="hits" value="6 hits in 735 CRISPR screens"/>
</dbReference>
<dbReference type="GeneWiki" id="OR11A1"/>
<dbReference type="GenomeRNAi" id="26531"/>
<dbReference type="Pharos" id="Q9GZK7">
    <property type="development level" value="Tdark"/>
</dbReference>
<dbReference type="PRO" id="PR:Q9GZK7"/>
<dbReference type="Proteomes" id="UP000005640">
    <property type="component" value="Chromosome 6"/>
</dbReference>
<dbReference type="RNAct" id="Q9GZK7">
    <property type="molecule type" value="protein"/>
</dbReference>
<dbReference type="Bgee" id="ENSG00000204694">
    <property type="expression patterns" value="Expressed in male germ line stem cell (sensu Vertebrata) in testis and 2 other cell types or tissues"/>
</dbReference>
<dbReference type="ExpressionAtlas" id="Q9GZK7">
    <property type="expression patterns" value="baseline and differential"/>
</dbReference>
<dbReference type="GO" id="GO:0005886">
    <property type="term" value="C:plasma membrane"/>
    <property type="evidence" value="ECO:0000304"/>
    <property type="project" value="Reactome"/>
</dbReference>
<dbReference type="GO" id="GO:0004930">
    <property type="term" value="F:G protein-coupled receptor activity"/>
    <property type="evidence" value="ECO:0007669"/>
    <property type="project" value="UniProtKB-KW"/>
</dbReference>
<dbReference type="GO" id="GO:0004984">
    <property type="term" value="F:olfactory receptor activity"/>
    <property type="evidence" value="ECO:0007669"/>
    <property type="project" value="InterPro"/>
</dbReference>
<dbReference type="CDD" id="cd15911">
    <property type="entry name" value="7tmA_OR11A-like"/>
    <property type="match status" value="1"/>
</dbReference>
<dbReference type="FunFam" id="1.20.1070.10:FF:000010">
    <property type="entry name" value="Olfactory receptor"/>
    <property type="match status" value="1"/>
</dbReference>
<dbReference type="Gene3D" id="1.20.1070.10">
    <property type="entry name" value="Rhodopsin 7-helix transmembrane proteins"/>
    <property type="match status" value="1"/>
</dbReference>
<dbReference type="InterPro" id="IPR000276">
    <property type="entry name" value="GPCR_Rhodpsn"/>
</dbReference>
<dbReference type="InterPro" id="IPR017452">
    <property type="entry name" value="GPCR_Rhodpsn_7TM"/>
</dbReference>
<dbReference type="InterPro" id="IPR000725">
    <property type="entry name" value="Olfact_rcpt"/>
</dbReference>
<dbReference type="InterPro" id="IPR050939">
    <property type="entry name" value="Olfactory_GPCR1"/>
</dbReference>
<dbReference type="PANTHER" id="PTHR24242">
    <property type="entry name" value="G-PROTEIN COUPLED RECEPTOR"/>
    <property type="match status" value="1"/>
</dbReference>
<dbReference type="PANTHER" id="PTHR24242:SF378">
    <property type="entry name" value="OLFACTORY RECEPTOR 11A1"/>
    <property type="match status" value="1"/>
</dbReference>
<dbReference type="Pfam" id="PF13853">
    <property type="entry name" value="7tm_4"/>
    <property type="match status" value="1"/>
</dbReference>
<dbReference type="PRINTS" id="PR00237">
    <property type="entry name" value="GPCRRHODOPSN"/>
</dbReference>
<dbReference type="PRINTS" id="PR00245">
    <property type="entry name" value="OLFACTORYR"/>
</dbReference>
<dbReference type="SUPFAM" id="SSF81321">
    <property type="entry name" value="Family A G protein-coupled receptor-like"/>
    <property type="match status" value="1"/>
</dbReference>
<dbReference type="PROSITE" id="PS00237">
    <property type="entry name" value="G_PROTEIN_RECEP_F1_1"/>
    <property type="match status" value="1"/>
</dbReference>
<dbReference type="PROSITE" id="PS50262">
    <property type="entry name" value="G_PROTEIN_RECEP_F1_2"/>
    <property type="match status" value="1"/>
</dbReference>
<sequence length="315" mass="35250">MEIVSTGNETITEFVLLGFYDIPELHFLFFIVFTAVYVFIIIGNMLIIVAVVSSQRLHKPMYIFLANLSFLDILYTSAVMPKMLEGFLQEATISVAGCLLQFFIFGSLATAECLLLAVMAYDRYLAICYPLHYPLLMGPRRYMGLVVTTWLSGFVVDGLVVALVAQLRFCGPNHIDQFYCDFMLFVGLACSDPRVAQVTTLILSVFCLTIPFGLILTSYARIVVAVLRVPAGASRRRAFSTCSSHLAVVTTFYGTLMIFYVAPSAVHSQLLSKVFSLLYTVVTPLFNPVIYTMRNKEVHQALRKILCIKQTETLD</sequence>
<organism>
    <name type="scientific">Homo sapiens</name>
    <name type="common">Human</name>
    <dbReference type="NCBI Taxonomy" id="9606"/>
    <lineage>
        <taxon>Eukaryota</taxon>
        <taxon>Metazoa</taxon>
        <taxon>Chordata</taxon>
        <taxon>Craniata</taxon>
        <taxon>Vertebrata</taxon>
        <taxon>Euteleostomi</taxon>
        <taxon>Mammalia</taxon>
        <taxon>Eutheria</taxon>
        <taxon>Euarchontoglires</taxon>
        <taxon>Primates</taxon>
        <taxon>Haplorrhini</taxon>
        <taxon>Catarrhini</taxon>
        <taxon>Hominidae</taxon>
        <taxon>Homo</taxon>
    </lineage>
</organism>
<evidence type="ECO:0000255" key="1"/>
<evidence type="ECO:0000255" key="2">
    <source>
        <dbReference type="PROSITE-ProRule" id="PRU00521"/>
    </source>
</evidence>
<evidence type="ECO:0000269" key="3">
    <source>
    </source>
</evidence>
<evidence type="ECO:0000269" key="4">
    <source ref="1"/>
</evidence>
<evidence type="ECO:0000305" key="5"/>
<keyword id="KW-1003">Cell membrane</keyword>
<keyword id="KW-1015">Disulfide bond</keyword>
<keyword id="KW-0297">G-protein coupled receptor</keyword>
<keyword id="KW-0325">Glycoprotein</keyword>
<keyword id="KW-0472">Membrane</keyword>
<keyword id="KW-0552">Olfaction</keyword>
<keyword id="KW-0675">Receptor</keyword>
<keyword id="KW-1185">Reference proteome</keyword>
<keyword id="KW-0716">Sensory transduction</keyword>
<keyword id="KW-0807">Transducer</keyword>
<keyword id="KW-0812">Transmembrane</keyword>
<keyword id="KW-1133">Transmembrane helix</keyword>
<comment type="function">
    <text evidence="5">Odorant receptor.</text>
</comment>
<comment type="subcellular location">
    <subcellularLocation>
        <location>Cell membrane</location>
        <topology>Multi-pass membrane protein</topology>
    </subcellularLocation>
</comment>
<comment type="similarity">
    <text evidence="2">Belongs to the G-protein coupled receptor 1 family.</text>
</comment>
<comment type="online information" name="Human Olfactory Receptor Data Exploratorium (HORDE)">
    <link uri="http://genome.weizmann.ac.il/horde/card/index/symbol:OR11A1"/>
</comment>
<feature type="chain" id="PRO_0000150722" description="Olfactory receptor 11A1">
    <location>
        <begin position="1"/>
        <end position="315"/>
    </location>
</feature>
<feature type="topological domain" description="Extracellular" evidence="1">
    <location>
        <begin position="1"/>
        <end position="27"/>
    </location>
</feature>
<feature type="transmembrane region" description="Helical; Name=1" evidence="1">
    <location>
        <begin position="28"/>
        <end position="48"/>
    </location>
</feature>
<feature type="topological domain" description="Cytoplasmic" evidence="1">
    <location>
        <begin position="49"/>
        <end position="56"/>
    </location>
</feature>
<feature type="transmembrane region" description="Helical; Name=2" evidence="1">
    <location>
        <begin position="57"/>
        <end position="77"/>
    </location>
</feature>
<feature type="topological domain" description="Extracellular" evidence="1">
    <location>
        <begin position="78"/>
        <end position="100"/>
    </location>
</feature>
<feature type="transmembrane region" description="Helical; Name=3" evidence="1">
    <location>
        <begin position="101"/>
        <end position="121"/>
    </location>
</feature>
<feature type="topological domain" description="Cytoplasmic" evidence="1">
    <location>
        <begin position="122"/>
        <end position="140"/>
    </location>
</feature>
<feature type="transmembrane region" description="Helical; Name=4" evidence="1">
    <location>
        <begin position="141"/>
        <end position="161"/>
    </location>
</feature>
<feature type="topological domain" description="Extracellular" evidence="1">
    <location>
        <begin position="162"/>
        <end position="198"/>
    </location>
</feature>
<feature type="transmembrane region" description="Helical; Name=5" evidence="1">
    <location>
        <begin position="199"/>
        <end position="218"/>
    </location>
</feature>
<feature type="topological domain" description="Cytoplasmic" evidence="1">
    <location>
        <begin position="219"/>
        <end position="238"/>
    </location>
</feature>
<feature type="transmembrane region" description="Helical; Name=6" evidence="1">
    <location>
        <begin position="239"/>
        <end position="259"/>
    </location>
</feature>
<feature type="topological domain" description="Extracellular" evidence="1">
    <location>
        <begin position="260"/>
        <end position="272"/>
    </location>
</feature>
<feature type="transmembrane region" description="Helical; Name=7" evidence="1">
    <location>
        <begin position="273"/>
        <end position="293"/>
    </location>
</feature>
<feature type="topological domain" description="Cytoplasmic" evidence="1">
    <location>
        <begin position="294"/>
        <end position="315"/>
    </location>
</feature>
<feature type="glycosylation site" description="N-linked (GlcNAc...) asparagine" evidence="1">
    <location>
        <position position="8"/>
    </location>
</feature>
<feature type="disulfide bond" evidence="2">
    <location>
        <begin position="98"/>
        <end position="190"/>
    </location>
</feature>
<feature type="sequence variant" id="VAR_053294" description="In dbSNP:rs16894898.">
    <original>Y</original>
    <variation>C</variation>
    <location>
        <position position="121"/>
    </location>
</feature>
<feature type="sequence variant" id="VAR_010955" description="In allele 6M1-18*02; dbSNP:rs9257857." evidence="3 4">
    <original>A</original>
    <variation>T</variation>
    <location>
        <position position="165"/>
    </location>
</feature>
<gene>
    <name type="primary">OR11A1</name>
    <name type="synonym">OR11A2</name>
</gene>